<dbReference type="EMBL" id="CP000720">
    <property type="protein sequence ID" value="ABS49842.1"/>
    <property type="molecule type" value="Genomic_DNA"/>
</dbReference>
<dbReference type="RefSeq" id="WP_002213329.1">
    <property type="nucleotide sequence ID" value="NC_009708.1"/>
</dbReference>
<dbReference type="SMR" id="A7FNM2"/>
<dbReference type="GeneID" id="96663184"/>
<dbReference type="KEGG" id="ypi:YpsIP31758_3902"/>
<dbReference type="HOGENOM" id="CLU_061015_2_1_6"/>
<dbReference type="Proteomes" id="UP000002412">
    <property type="component" value="Chromosome"/>
</dbReference>
<dbReference type="GO" id="GO:1990904">
    <property type="term" value="C:ribonucleoprotein complex"/>
    <property type="evidence" value="ECO:0007669"/>
    <property type="project" value="UniProtKB-KW"/>
</dbReference>
<dbReference type="GO" id="GO:0005840">
    <property type="term" value="C:ribosome"/>
    <property type="evidence" value="ECO:0007669"/>
    <property type="project" value="UniProtKB-KW"/>
</dbReference>
<dbReference type="GO" id="GO:0019843">
    <property type="term" value="F:rRNA binding"/>
    <property type="evidence" value="ECO:0007669"/>
    <property type="project" value="UniProtKB-UniRule"/>
</dbReference>
<dbReference type="GO" id="GO:0003735">
    <property type="term" value="F:structural constituent of ribosome"/>
    <property type="evidence" value="ECO:0007669"/>
    <property type="project" value="InterPro"/>
</dbReference>
<dbReference type="GO" id="GO:0000049">
    <property type="term" value="F:tRNA binding"/>
    <property type="evidence" value="ECO:0007669"/>
    <property type="project" value="UniProtKB-UniRule"/>
</dbReference>
<dbReference type="GO" id="GO:0006412">
    <property type="term" value="P:translation"/>
    <property type="evidence" value="ECO:0007669"/>
    <property type="project" value="UniProtKB-UniRule"/>
</dbReference>
<dbReference type="FunFam" id="3.30.1440.10:FF:000001">
    <property type="entry name" value="50S ribosomal protein L5"/>
    <property type="match status" value="1"/>
</dbReference>
<dbReference type="Gene3D" id="3.30.1440.10">
    <property type="match status" value="1"/>
</dbReference>
<dbReference type="HAMAP" id="MF_01333_B">
    <property type="entry name" value="Ribosomal_uL5_B"/>
    <property type="match status" value="1"/>
</dbReference>
<dbReference type="InterPro" id="IPR002132">
    <property type="entry name" value="Ribosomal_uL5"/>
</dbReference>
<dbReference type="InterPro" id="IPR020930">
    <property type="entry name" value="Ribosomal_uL5_bac-type"/>
</dbReference>
<dbReference type="InterPro" id="IPR031309">
    <property type="entry name" value="Ribosomal_uL5_C"/>
</dbReference>
<dbReference type="InterPro" id="IPR022803">
    <property type="entry name" value="Ribosomal_uL5_dom_sf"/>
</dbReference>
<dbReference type="InterPro" id="IPR031310">
    <property type="entry name" value="Ribosomal_uL5_N"/>
</dbReference>
<dbReference type="NCBIfam" id="NF000585">
    <property type="entry name" value="PRK00010.1"/>
    <property type="match status" value="1"/>
</dbReference>
<dbReference type="PANTHER" id="PTHR11994">
    <property type="entry name" value="60S RIBOSOMAL PROTEIN L11-RELATED"/>
    <property type="match status" value="1"/>
</dbReference>
<dbReference type="Pfam" id="PF00281">
    <property type="entry name" value="Ribosomal_L5"/>
    <property type="match status" value="1"/>
</dbReference>
<dbReference type="Pfam" id="PF00673">
    <property type="entry name" value="Ribosomal_L5_C"/>
    <property type="match status" value="1"/>
</dbReference>
<dbReference type="PIRSF" id="PIRSF002161">
    <property type="entry name" value="Ribosomal_L5"/>
    <property type="match status" value="1"/>
</dbReference>
<dbReference type="SUPFAM" id="SSF55282">
    <property type="entry name" value="RL5-like"/>
    <property type="match status" value="1"/>
</dbReference>
<reference key="1">
    <citation type="journal article" date="2007" name="PLoS Genet.">
        <title>The complete genome sequence of Yersinia pseudotuberculosis IP31758, the causative agent of Far East scarlet-like fever.</title>
        <authorList>
            <person name="Eppinger M."/>
            <person name="Rosovitz M.J."/>
            <person name="Fricke W.F."/>
            <person name="Rasko D.A."/>
            <person name="Kokorina G."/>
            <person name="Fayolle C."/>
            <person name="Lindler L.E."/>
            <person name="Carniel E."/>
            <person name="Ravel J."/>
        </authorList>
    </citation>
    <scope>NUCLEOTIDE SEQUENCE [LARGE SCALE GENOMIC DNA]</scope>
    <source>
        <strain>IP 31758</strain>
    </source>
</reference>
<protein>
    <recommendedName>
        <fullName evidence="1">Large ribosomal subunit protein uL5</fullName>
    </recommendedName>
    <alternativeName>
        <fullName evidence="2">50S ribosomal protein L5</fullName>
    </alternativeName>
</protein>
<gene>
    <name evidence="1" type="primary">rplE</name>
    <name type="ordered locus">YpsIP31758_3902</name>
</gene>
<accession>A7FNM2</accession>
<proteinExistence type="inferred from homology"/>
<feature type="chain" id="PRO_1000067626" description="Large ribosomal subunit protein uL5">
    <location>
        <begin position="1"/>
        <end position="179"/>
    </location>
</feature>
<comment type="function">
    <text evidence="1">This is one of the proteins that bind and probably mediate the attachment of the 5S RNA into the large ribosomal subunit, where it forms part of the central protuberance. In the 70S ribosome it contacts protein S13 of the 30S subunit (bridge B1b), connecting the 2 subunits; this bridge is implicated in subunit movement. Contacts the P site tRNA; the 5S rRNA and some of its associated proteins might help stabilize positioning of ribosome-bound tRNAs.</text>
</comment>
<comment type="subunit">
    <text evidence="1">Part of the 50S ribosomal subunit; part of the 5S rRNA/L5/L18/L25 subcomplex. Contacts the 5S rRNA and the P site tRNA. Forms a bridge to the 30S subunit in the 70S ribosome.</text>
</comment>
<comment type="similarity">
    <text evidence="1">Belongs to the universal ribosomal protein uL5 family.</text>
</comment>
<keyword id="KW-0687">Ribonucleoprotein</keyword>
<keyword id="KW-0689">Ribosomal protein</keyword>
<keyword id="KW-0694">RNA-binding</keyword>
<keyword id="KW-0699">rRNA-binding</keyword>
<keyword id="KW-0820">tRNA-binding</keyword>
<sequence length="179" mass="20264">MAKLHDYYKDEVVKQLMSQFGYDSVMQVPRVEKITLNMGVGEAIADKKLLDNAAADLAAISGQKPFITKARKSVAGFKIRQGYPIGCKVTLRGERMWEFFERLITIAVPRIRDFRGLSAKSFDGRGNYSMGVREQIIFPEIDYDKVDRVRGLDITITTTAKSDDEGRALLAAFKFPFRK</sequence>
<organism>
    <name type="scientific">Yersinia pseudotuberculosis serotype O:1b (strain IP 31758)</name>
    <dbReference type="NCBI Taxonomy" id="349747"/>
    <lineage>
        <taxon>Bacteria</taxon>
        <taxon>Pseudomonadati</taxon>
        <taxon>Pseudomonadota</taxon>
        <taxon>Gammaproteobacteria</taxon>
        <taxon>Enterobacterales</taxon>
        <taxon>Yersiniaceae</taxon>
        <taxon>Yersinia</taxon>
    </lineage>
</organism>
<evidence type="ECO:0000255" key="1">
    <source>
        <dbReference type="HAMAP-Rule" id="MF_01333"/>
    </source>
</evidence>
<evidence type="ECO:0000305" key="2"/>
<name>RL5_YERP3</name>